<comment type="function">
    <text evidence="1 7">APOE is an apolipoprotein, a protein associating with lipid particles, that mainly functions in lipoprotein-mediated lipid transport between organs via the plasma and interstitial fluids. APOE is a core component of plasma lipoproteins and is involved in their production, conversion and clearance. Apolipoproteins are amphipathic molecules that interact both with lipids of the lipoprotein particle core and the aqueous environment of the plasma. As such, APOE associates with chylomicrons, chylomicron remnants, very low density lipoproteins (VLDL) and intermediate density lipoproteins (IDL) but shows a preferential binding to high-density lipoproteins (HDL). It also binds a wide range of cellular receptors including the LDL receptor/LDLR and the very low-density lipoprotein receptor/VLDLR that mediate the cellular uptake of the APOE-containing lipoprotein particles (By similarity). Finally, APOE also has a heparin-binding activity and binds heparan-sulfate proteoglycans on the surface of cells, a property that supports the capture and the receptor-mediated uptake of APOE-containing lipoproteins by cells (PubMed:23676495).</text>
</comment>
<comment type="subunit">
    <text evidence="1">Homotetramer. May interact with ABCA1; functionally associated with ABCA1 in the biogenesis of HDLs. May interact with APP/A4 amyloid-beta peptide; the interaction is extremely stable in vitro but its physiological significance is unclear. May interact with MAPT. May interact with MAP2. In the cerebrospinal fluid, interacts with secreted SORL1. Interacts with PMEL; this allows the loading of PMEL luminal fragment on ILVs to induce fibril nucleation.</text>
</comment>
<comment type="interaction">
    <interactant intactId="EBI-1634131">
        <id>P08226</id>
    </interactant>
    <interactant intactId="EBI-3454258">
        <id>Q9QZM3</id>
        <label>Clcf1</label>
    </interactant>
    <organismsDiffer>false</organismsDiffer>
    <experiments>2</experiments>
</comment>
<comment type="subcellular location">
    <subcellularLocation>
        <location evidence="1">Secreted</location>
    </subcellularLocation>
    <subcellularLocation>
        <location evidence="1">Secreted</location>
        <location evidence="1">Extracellular space</location>
    </subcellularLocation>
    <subcellularLocation>
        <location evidence="1">Secreted</location>
        <location evidence="1">Extracellular space</location>
        <location evidence="1">Extracellular matrix</location>
    </subcellularLocation>
    <subcellularLocation>
        <location evidence="1">Extracellular vesicle</location>
    </subcellularLocation>
    <subcellularLocation>
        <location evidence="1">Endosome</location>
        <location evidence="1">Multivesicular body</location>
    </subcellularLocation>
    <text evidence="1">In the plasma, APOE is associated with chylomicrons, chylomicrons remnants, VLDL, LDL and HDL lipoproteins. Lipid poor oligomeric APOE is associated with the extracellular matrix in a calcium- and heparan-sulfate proteoglycans-dependent manner. Lipidation induces the release from the extracellular matrix. Colocalizes with CD63 and PMEL at exosomes and in intraluminal vesicles within multivesicular endosomes.</text>
</comment>
<comment type="PTM">
    <text evidence="10">APOE exists as multiple glycosylated and sialylated glycoforms within cells and in plasma. The extent of glycosylation and sialylation are tissue and context specific.</text>
</comment>
<comment type="PTM">
    <text evidence="1">Glycated in plasma VLDL.</text>
</comment>
<comment type="PTM">
    <text evidence="1">Phosphorylated by FAM20C in the extracellular medium.</text>
</comment>
<comment type="disruption phenotype">
    <text evidence="3 4 6 8 9">APOE knockout mice display severe hypercholesterolemia associated with impaired clearance of dietary fats (PubMed:1423598). Excess cholesterol is more particularly associated with the atherogenic very low and intermediate density lipoproteins in the plasma (PubMed:1423598). These mice are therefore prone to atherosclerosis (PubMed:1423598). Mice lacking both Cx3cr1 and Apoe show decreased atherogenesis (PubMed:12569158). Animals with a double knockout of APOE and CD36, fed a Western diet for 12 weeks, exhibit much lower levels of CXCL1, CXCL2 and CCL5 mRNA expression in the descending aorta and a corresponding decrease in atherosclerotic lesion formation, compared to APOE single knockout mice (PubMed:23812099). Animals with a double knockout of APOE and TLR4 or TLR6 also have less aortic plaque formation than single knockout mice. All 3 double knockout show lower serum concentrations of IL1A, ILB and IL18 (PubMed:20037584). The melanosomes of APOE knockout mice lack the ellipsoidal shape indicative of deficient PMEL amyloidogenesis.</text>
</comment>
<comment type="similarity">
    <text evidence="11">Belongs to the apolipoprotein A1/A4/E family.</text>
</comment>
<reference key="1">
    <citation type="journal article" date="1989" name="J. Biochem.">
        <title>Structure and expression of mouse apolipoprotein E gene.</title>
        <authorList>
            <person name="Horiuchi K."/>
            <person name="Tajima S."/>
            <person name="Menju M."/>
            <person name="Yamamoto A."/>
        </authorList>
    </citation>
    <scope>NUCLEOTIDE SEQUENCE [GENOMIC DNA]</scope>
</reference>
<reference key="2">
    <citation type="journal article" date="1985" name="Proc. Natl. Acad. Sci. U.S.A.">
        <title>Evolution of apolipoprotein E: mouse sequence and evidence for an 11-nucleotide ancestral unit.</title>
        <authorList>
            <person name="Rajavashisth T.B."/>
            <person name="Kaptein J.S."/>
            <person name="Reue K.L."/>
            <person name="Lusis A.J."/>
        </authorList>
    </citation>
    <scope>NUCLEOTIDE SEQUENCE [MRNA]</scope>
</reference>
<reference key="3">
    <citation type="journal article" date="2004" name="Genome Res.">
        <title>The status, quality, and expansion of the NIH full-length cDNA project: the Mammalian Gene Collection (MGC).</title>
        <authorList>
            <consortium name="The MGC Project Team"/>
        </authorList>
    </citation>
    <scope>NUCLEOTIDE SEQUENCE [LARGE SCALE MRNA]</scope>
    <source>
        <strain>C57BL/6J</strain>
        <tissue>Brain</tissue>
    </source>
</reference>
<reference key="4">
    <citation type="journal article" date="1991" name="J. Virol.">
        <title>Neuropathological changes in scrapie and Alzheimer's disease are associated with increased expression of apolipoprotein E and cathepsin D in astrocytes.</title>
        <authorList>
            <person name="Diedrich J.F."/>
            <person name="Minnigan M."/>
            <person name="Carp R.I."/>
            <person name="Whitaker J.N."/>
            <person name="Race R."/>
            <person name="Frey W. II"/>
            <person name="Haase A.T."/>
        </authorList>
    </citation>
    <scope>NUCLEOTIDE SEQUENCE [MRNA] OF 26-311</scope>
</reference>
<reference key="5">
    <citation type="journal article" date="2006" name="Biochim. Biophys. Acta">
        <title>Mass spectral analysis of the apolipoproteins on mouse high density lipoproteins. Detection of post-translational modifications.</title>
        <authorList>
            <person name="Puppione D.L."/>
            <person name="Yam L.M."/>
            <person name="Bassilian S."/>
            <person name="Souda P."/>
            <person name="Castellani L.W."/>
            <person name="Schumaker V.N."/>
            <person name="Whitelegge J.P."/>
        </authorList>
    </citation>
    <scope>PROTEIN SEQUENCE OF 43-48; 87-100; 114-122; 130-144; 183-188; 191-198; 202-214; 226-236 AND 253-284</scope>
    <scope>IDENTIFICATION BY MASS SPECTROMETRY</scope>
    <scope>OXIDATION AT MET-135</scope>
</reference>
<reference key="6">
    <citation type="submission" date="2007-04" db="UniProtKB">
        <authorList>
            <person name="Lubec G."/>
            <person name="Kang S.U."/>
        </authorList>
    </citation>
    <scope>PROTEIN SEQUENCE OF 114-122</scope>
    <scope>IDENTIFICATION BY MASS SPECTROMETRY</scope>
    <source>
        <strain>C57BL/6J</strain>
        <tissue>Brain</tissue>
    </source>
</reference>
<reference key="7">
    <citation type="journal article" date="2010" name="Cell">
        <title>A tissue-specific atlas of mouse protein phosphorylation and expression.</title>
        <authorList>
            <person name="Huttlin E.L."/>
            <person name="Jedrychowski M.P."/>
            <person name="Elias J.E."/>
            <person name="Goswami T."/>
            <person name="Rad R."/>
            <person name="Beausoleil S.A."/>
            <person name="Villen J."/>
            <person name="Haas W."/>
            <person name="Sowa M.E."/>
            <person name="Gygi S.P."/>
        </authorList>
    </citation>
    <scope>PHOSPHORYLATION [LARGE SCALE ANALYSIS] AT SER-139</scope>
    <scope>IDENTIFICATION BY MASS SPECTROMETRY [LARGE SCALE ANALYSIS]</scope>
    <source>
        <tissue>Brain</tissue>
        <tissue>Brown adipose tissue</tissue>
        <tissue>Heart</tissue>
        <tissue>Kidney</tissue>
        <tissue>Liver</tissue>
        <tissue>Lung</tissue>
        <tissue>Pancreas</tissue>
        <tissue>Spleen</tissue>
        <tissue>Testis</tissue>
    </source>
</reference>
<reference key="8">
    <citation type="journal article" date="1992" name="Cell">
        <title>Severe hypercholesterolemia and atherosclerosis in apolipoprotein E-deficient mice created by homologous recombination in ES cells.</title>
        <authorList>
            <person name="Plump A.S."/>
            <person name="Smith J.D."/>
            <person name="Hayek T."/>
            <person name="Aalto-Setaelae K."/>
            <person name="Walsh A."/>
            <person name="Verstuyft J.G."/>
            <person name="Rubin E.M."/>
            <person name="Breslow J.L."/>
        </authorList>
    </citation>
    <scope>DISRUPTION PHENOTYPE</scope>
</reference>
<reference key="9">
    <citation type="journal article" date="2003" name="J. Clin. Invest.">
        <title>Decreased atherosclerosis in CX3CR1-/- mice reveals a role for fractalkine in atherogenesis.</title>
        <authorList>
            <person name="Lesnik P."/>
            <person name="Haskell C.A."/>
            <person name="Charo I.F."/>
        </authorList>
    </citation>
    <scope>DISRUPTION PHENOTYPE</scope>
</reference>
<reference key="10">
    <citation type="journal article" date="2010" name="Nat. Immunol.">
        <title>CD36 ligands promote sterile inflammation through assembly of a Toll-like receptor 4 and 6 heterodimer.</title>
        <authorList>
            <person name="Stewart C.R."/>
            <person name="Stuart L.M."/>
            <person name="Wilkinson K."/>
            <person name="van Gils J.M."/>
            <person name="Deng J."/>
            <person name="Halle A."/>
            <person name="Rayner K.J."/>
            <person name="Boyer L."/>
            <person name="Zhong R."/>
            <person name="Frazier W.A."/>
            <person name="Lacy-Hulbert A."/>
            <person name="El Khoury J."/>
            <person name="Golenbock D.T."/>
            <person name="Moore K.J."/>
        </authorList>
    </citation>
    <scope>DISRUPTION PHENOTYPE</scope>
</reference>
<reference key="11">
    <citation type="journal article" date="2013" name="J. Clin. Invest.">
        <title>Apolipoproteins E and AV mediate lipoprotein clearance by hepatic proteoglycans.</title>
        <authorList>
            <person name="Gonzales J.C."/>
            <person name="Gordts P.L."/>
            <person name="Foley E.M."/>
            <person name="Esko J.D."/>
        </authorList>
    </citation>
    <scope>FUNCTION - IN LIPOPROTEIN CLEARANCE VIA HEPARAN</scope>
    <scope>HEPARAN-SULFATE PROTEOGLYCANS BINDING</scope>
</reference>
<reference key="12">
    <citation type="journal article" date="2013" name="Nat. Immunol.">
        <title>CD36 coordinates NLRP3 inflammasome activation by facilitating intracellular nucleation of soluble ligands into particulate ligands in sterile inflammation.</title>
        <authorList>
            <person name="Sheedy F.J."/>
            <person name="Grebe A."/>
            <person name="Rayner K.J."/>
            <person name="Kalantari P."/>
            <person name="Ramkhelawon B."/>
            <person name="Carpenter S.B."/>
            <person name="Becker C.E."/>
            <person name="Ediriweera H.N."/>
            <person name="Mullick A.E."/>
            <person name="Golenbock D.T."/>
            <person name="Stuart L.M."/>
            <person name="Latz E."/>
            <person name="Fitzgerald K.A."/>
            <person name="Moore K.J."/>
        </authorList>
    </citation>
    <scope>DISRUPTION PHENOTYPE</scope>
</reference>
<reference key="13">
    <citation type="journal article" date="2015" name="Cell Rep.">
        <title>Apolipoprotein E Regulates Amyloid Formation within Endosomes of Pigment Cells.</title>
        <authorList>
            <person name="van Niel G."/>
            <person name="Bergam P."/>
            <person name="Di Cicco A."/>
            <person name="Hurbain I."/>
            <person name="Lo Cicero A."/>
            <person name="Dingli F."/>
            <person name="Palmulli R."/>
            <person name="Fort C."/>
            <person name="Potier M.C."/>
            <person name="Schurgers L.J."/>
            <person name="Loew D."/>
            <person name="Levy D."/>
            <person name="Raposo G."/>
        </authorList>
    </citation>
    <scope>DISRUPTION PHENOTYPE</scope>
</reference>
<reference key="14">
    <citation type="journal article" date="2018" name="J. Mol. Med.">
        <title>Cell-specific production, secretion, and function of apolipoprotein E.</title>
        <authorList>
            <person name="Kockx M."/>
            <person name="Traini M."/>
            <person name="Kritharides L."/>
        </authorList>
    </citation>
    <scope>GLYCOSYLATION</scope>
</reference>
<dbReference type="EMBL" id="D00466">
    <property type="protein sequence ID" value="BAA00361.1"/>
    <property type="molecule type" value="Genomic_DNA"/>
</dbReference>
<dbReference type="EMBL" id="M12414">
    <property type="protein sequence ID" value="AAA37251.1"/>
    <property type="molecule type" value="mRNA"/>
</dbReference>
<dbReference type="EMBL" id="BC083351">
    <property type="protein sequence ID" value="AAH83351.1"/>
    <property type="molecule type" value="mRNA"/>
</dbReference>
<dbReference type="EMBL" id="M73490">
    <property type="protein sequence ID" value="AAA37252.1"/>
    <property type="molecule type" value="mRNA"/>
</dbReference>
<dbReference type="CCDS" id="CCDS20912.1"/>
<dbReference type="PIR" id="JU0036">
    <property type="entry name" value="JU0036"/>
</dbReference>
<dbReference type="RefSeq" id="NP_001292748.1">
    <property type="nucleotide sequence ID" value="NM_001305819.1"/>
</dbReference>
<dbReference type="RefSeq" id="NP_001292772.1">
    <property type="nucleotide sequence ID" value="NM_001305843.1"/>
</dbReference>
<dbReference type="RefSeq" id="NP_001292773.1">
    <property type="nucleotide sequence ID" value="NM_001305844.1"/>
</dbReference>
<dbReference type="RefSeq" id="NP_033826.2">
    <property type="nucleotide sequence ID" value="NM_009696.4"/>
</dbReference>
<dbReference type="RefSeq" id="XP_030097875.1">
    <property type="nucleotide sequence ID" value="XM_030242015.2"/>
</dbReference>
<dbReference type="PDB" id="1YA9">
    <property type="method" value="X-ray"/>
    <property type="resolution" value="2.09 A"/>
    <property type="chains" value="A=20-200"/>
</dbReference>
<dbReference type="PDBsum" id="1YA9"/>
<dbReference type="SMR" id="P08226"/>
<dbReference type="BioGRID" id="198164">
    <property type="interactions" value="29"/>
</dbReference>
<dbReference type="FunCoup" id="P08226">
    <property type="interactions" value="216"/>
</dbReference>
<dbReference type="IntAct" id="P08226">
    <property type="interactions" value="6"/>
</dbReference>
<dbReference type="MINT" id="P08226"/>
<dbReference type="STRING" id="10090.ENSMUSP00000133302"/>
<dbReference type="GlyGen" id="P08226">
    <property type="glycosylation" value="1 site, 1 O-linked glycan (1 site)"/>
</dbReference>
<dbReference type="iPTMnet" id="P08226"/>
<dbReference type="PhosphoSitePlus" id="P08226"/>
<dbReference type="CPTAC" id="non-CPTAC-3396"/>
<dbReference type="CPTAC" id="non-CPTAC-5578"/>
<dbReference type="jPOST" id="P08226"/>
<dbReference type="PaxDb" id="10090-ENSMUSP00000133302"/>
<dbReference type="PeptideAtlas" id="P08226"/>
<dbReference type="ProteomicsDB" id="283162"/>
<dbReference type="Antibodypedia" id="3639">
    <property type="antibodies" value="1461 antibodies from 50 providers"/>
</dbReference>
<dbReference type="DNASU" id="11816"/>
<dbReference type="Ensembl" id="ENSMUST00000003066.16">
    <property type="protein sequence ID" value="ENSMUSP00000003066.10"/>
    <property type="gene ID" value="ENSMUSG00000002985.17"/>
</dbReference>
<dbReference type="Ensembl" id="ENSMUST00000173739.8">
    <property type="protein sequence ID" value="ENSMUSP00000133371.2"/>
    <property type="gene ID" value="ENSMUSG00000002985.17"/>
</dbReference>
<dbReference type="Ensembl" id="ENSMUST00000174064.9">
    <property type="protein sequence ID" value="ENSMUSP00000133302.2"/>
    <property type="gene ID" value="ENSMUSG00000002985.17"/>
</dbReference>
<dbReference type="Ensembl" id="ENSMUST00000174355.8">
    <property type="protein sequence ID" value="ENSMUSP00000134160.2"/>
    <property type="gene ID" value="ENSMUSG00000002985.17"/>
</dbReference>
<dbReference type="GeneID" id="11816"/>
<dbReference type="KEGG" id="mmu:11816"/>
<dbReference type="UCSC" id="uc009fmy.3">
    <property type="organism name" value="mouse"/>
</dbReference>
<dbReference type="AGR" id="MGI:88057"/>
<dbReference type="CTD" id="348"/>
<dbReference type="MGI" id="MGI:88057">
    <property type="gene designation" value="Apoe"/>
</dbReference>
<dbReference type="VEuPathDB" id="HostDB:ENSMUSG00000002985"/>
<dbReference type="eggNOG" id="ENOG502QVD6">
    <property type="taxonomic scope" value="Eukaryota"/>
</dbReference>
<dbReference type="GeneTree" id="ENSGT00950000182929"/>
<dbReference type="HOGENOM" id="CLU_066029_0_0_1"/>
<dbReference type="InParanoid" id="P08226"/>
<dbReference type="OMA" id="GHMTDAR"/>
<dbReference type="OrthoDB" id="9048614at2759"/>
<dbReference type="PhylomeDB" id="P08226"/>
<dbReference type="TreeFam" id="TF334458"/>
<dbReference type="Reactome" id="R-MMU-3000480">
    <property type="pathway name" value="Scavenging by Class A Receptors"/>
</dbReference>
<dbReference type="Reactome" id="R-MMU-381426">
    <property type="pathway name" value="Regulation of Insulin-like Growth Factor (IGF) transport and uptake by Insulin-like Growth Factor Binding Proteins (IGFBPs)"/>
</dbReference>
<dbReference type="Reactome" id="R-MMU-8957275">
    <property type="pathway name" value="Post-translational protein phosphorylation"/>
</dbReference>
<dbReference type="Reactome" id="R-MMU-8963888">
    <property type="pathway name" value="Chylomicron assembly"/>
</dbReference>
<dbReference type="Reactome" id="R-MMU-8963901">
    <property type="pathway name" value="Chylomicron remodeling"/>
</dbReference>
<dbReference type="Reactome" id="R-MMU-8964026">
    <property type="pathway name" value="Chylomicron clearance"/>
</dbReference>
<dbReference type="Reactome" id="R-MMU-8964058">
    <property type="pathway name" value="HDL remodeling"/>
</dbReference>
<dbReference type="Reactome" id="R-MMU-975634">
    <property type="pathway name" value="Retinoid metabolism and transport"/>
</dbReference>
<dbReference type="BioGRID-ORCS" id="11816">
    <property type="hits" value="4 hits in 66 CRISPR screens"/>
</dbReference>
<dbReference type="CD-CODE" id="CE726F99">
    <property type="entry name" value="Postsynaptic density"/>
</dbReference>
<dbReference type="ChiTaRS" id="Apoe">
    <property type="organism name" value="mouse"/>
</dbReference>
<dbReference type="EvolutionaryTrace" id="P08226"/>
<dbReference type="PRO" id="PR:P08226"/>
<dbReference type="Proteomes" id="UP000000589">
    <property type="component" value="Chromosome 7"/>
</dbReference>
<dbReference type="RNAct" id="P08226">
    <property type="molecule type" value="protein"/>
</dbReference>
<dbReference type="Bgee" id="ENSMUSG00000002985">
    <property type="expression patterns" value="Expressed in entorhinal cortex and 260 other cell types or tissues"/>
</dbReference>
<dbReference type="ExpressionAtlas" id="P08226">
    <property type="expression patterns" value="baseline and differential"/>
</dbReference>
<dbReference type="GO" id="GO:0034360">
    <property type="term" value="C:chylomicron remnant"/>
    <property type="evidence" value="ECO:0007669"/>
    <property type="project" value="Ensembl"/>
</dbReference>
<dbReference type="GO" id="GO:0005829">
    <property type="term" value="C:cytosol"/>
    <property type="evidence" value="ECO:0000304"/>
    <property type="project" value="Reactome"/>
</dbReference>
<dbReference type="GO" id="GO:0005783">
    <property type="term" value="C:endoplasmic reticulum"/>
    <property type="evidence" value="ECO:0007669"/>
    <property type="project" value="Ensembl"/>
</dbReference>
<dbReference type="GO" id="GO:0070062">
    <property type="term" value="C:extracellular exosome"/>
    <property type="evidence" value="ECO:0007669"/>
    <property type="project" value="Ensembl"/>
</dbReference>
<dbReference type="GO" id="GO:0031012">
    <property type="term" value="C:extracellular matrix"/>
    <property type="evidence" value="ECO:0000250"/>
    <property type="project" value="UniProtKB"/>
</dbReference>
<dbReference type="GO" id="GO:0005576">
    <property type="term" value="C:extracellular region"/>
    <property type="evidence" value="ECO:0000304"/>
    <property type="project" value="Reactome"/>
</dbReference>
<dbReference type="GO" id="GO:0005615">
    <property type="term" value="C:extracellular space"/>
    <property type="evidence" value="ECO:0000314"/>
    <property type="project" value="ARUK-UCL"/>
</dbReference>
<dbReference type="GO" id="GO:0098978">
    <property type="term" value="C:glutamatergic synapse"/>
    <property type="evidence" value="ECO:0000314"/>
    <property type="project" value="SynGO"/>
</dbReference>
<dbReference type="GO" id="GO:0005794">
    <property type="term" value="C:Golgi apparatus"/>
    <property type="evidence" value="ECO:0007669"/>
    <property type="project" value="Ensembl"/>
</dbReference>
<dbReference type="GO" id="GO:0034364">
    <property type="term" value="C:high-density lipoprotein particle"/>
    <property type="evidence" value="ECO:0000250"/>
    <property type="project" value="UniProtKB"/>
</dbReference>
<dbReference type="GO" id="GO:0034363">
    <property type="term" value="C:intermediate-density lipoprotein particle"/>
    <property type="evidence" value="ECO:0000250"/>
    <property type="project" value="UniProtKB"/>
</dbReference>
<dbReference type="GO" id="GO:0034362">
    <property type="term" value="C:low-density lipoprotein particle"/>
    <property type="evidence" value="ECO:0000314"/>
    <property type="project" value="BHF-UCL"/>
</dbReference>
<dbReference type="GO" id="GO:0042470">
    <property type="term" value="C:melanosome"/>
    <property type="evidence" value="ECO:0007669"/>
    <property type="project" value="Ensembl"/>
</dbReference>
<dbReference type="GO" id="GO:0097487">
    <property type="term" value="C:multivesicular body, internal vesicle"/>
    <property type="evidence" value="ECO:0007669"/>
    <property type="project" value="Ensembl"/>
</dbReference>
<dbReference type="GO" id="GO:0043083">
    <property type="term" value="C:synaptic cleft"/>
    <property type="evidence" value="ECO:0007669"/>
    <property type="project" value="Ensembl"/>
</dbReference>
<dbReference type="GO" id="GO:0034361">
    <property type="term" value="C:very-low-density lipoprotein particle"/>
    <property type="evidence" value="ECO:0000250"/>
    <property type="project" value="UniProtKB"/>
</dbReference>
<dbReference type="GO" id="GO:0001540">
    <property type="term" value="F:amyloid-beta binding"/>
    <property type="evidence" value="ECO:0000250"/>
    <property type="project" value="UniProtKB"/>
</dbReference>
<dbReference type="GO" id="GO:0016209">
    <property type="term" value="F:antioxidant activity"/>
    <property type="evidence" value="ECO:0007669"/>
    <property type="project" value="Ensembl"/>
</dbReference>
<dbReference type="GO" id="GO:0120020">
    <property type="term" value="F:cholesterol transfer activity"/>
    <property type="evidence" value="ECO:0000314"/>
    <property type="project" value="MGI"/>
</dbReference>
<dbReference type="GO" id="GO:0019899">
    <property type="term" value="F:enzyme binding"/>
    <property type="evidence" value="ECO:0007669"/>
    <property type="project" value="Ensembl"/>
</dbReference>
<dbReference type="GO" id="GO:0043395">
    <property type="term" value="F:heparan sulfate proteoglycan binding"/>
    <property type="evidence" value="ECO:0000314"/>
    <property type="project" value="UniProtKB"/>
</dbReference>
<dbReference type="GO" id="GO:0008201">
    <property type="term" value="F:heparin binding"/>
    <property type="evidence" value="ECO:0000250"/>
    <property type="project" value="UniProtKB"/>
</dbReference>
<dbReference type="GO" id="GO:0042802">
    <property type="term" value="F:identical protein binding"/>
    <property type="evidence" value="ECO:0000250"/>
    <property type="project" value="UniProtKB"/>
</dbReference>
<dbReference type="GO" id="GO:0071813">
    <property type="term" value="F:lipoprotein particle binding"/>
    <property type="evidence" value="ECO:0000314"/>
    <property type="project" value="MGI"/>
</dbReference>
<dbReference type="GO" id="GO:0050750">
    <property type="term" value="F:low-density lipoprotein particle receptor binding"/>
    <property type="evidence" value="ECO:0000250"/>
    <property type="project" value="UniProtKB"/>
</dbReference>
<dbReference type="GO" id="GO:0046911">
    <property type="term" value="F:metal chelating activity"/>
    <property type="evidence" value="ECO:0007669"/>
    <property type="project" value="Ensembl"/>
</dbReference>
<dbReference type="GO" id="GO:0060228">
    <property type="term" value="F:phosphatidylcholine-sterol O-acyltransferase activator activity"/>
    <property type="evidence" value="ECO:0000315"/>
    <property type="project" value="BHF-UCL"/>
</dbReference>
<dbReference type="GO" id="GO:0005543">
    <property type="term" value="F:phospholipid binding"/>
    <property type="evidence" value="ECO:0007669"/>
    <property type="project" value="Ensembl"/>
</dbReference>
<dbReference type="GO" id="GO:0042803">
    <property type="term" value="F:protein homodimerization activity"/>
    <property type="evidence" value="ECO:0007669"/>
    <property type="project" value="Ensembl"/>
</dbReference>
<dbReference type="GO" id="GO:0048018">
    <property type="term" value="F:receptor ligand activity"/>
    <property type="evidence" value="ECO:0007669"/>
    <property type="project" value="Ensembl"/>
</dbReference>
<dbReference type="GO" id="GO:0048156">
    <property type="term" value="F:tau protein binding"/>
    <property type="evidence" value="ECO:0007669"/>
    <property type="project" value="Ensembl"/>
</dbReference>
<dbReference type="GO" id="GO:0070326">
    <property type="term" value="F:very-low-density lipoprotein particle receptor binding"/>
    <property type="evidence" value="ECO:0007669"/>
    <property type="project" value="Ensembl"/>
</dbReference>
<dbReference type="GO" id="GO:0042982">
    <property type="term" value="P:amyloid precursor protein metabolic process"/>
    <property type="evidence" value="ECO:0007669"/>
    <property type="project" value="Ensembl"/>
</dbReference>
<dbReference type="GO" id="GO:0060840">
    <property type="term" value="P:artery development"/>
    <property type="evidence" value="ECO:0000316"/>
    <property type="project" value="MGI"/>
</dbReference>
<dbReference type="GO" id="GO:0048844">
    <property type="term" value="P:artery morphogenesis"/>
    <property type="evidence" value="ECO:0000316"/>
    <property type="project" value="MGI"/>
</dbReference>
<dbReference type="GO" id="GO:0071402">
    <property type="term" value="P:cellular response to lipoprotein particle stimulus"/>
    <property type="evidence" value="ECO:0007669"/>
    <property type="project" value="Ensembl"/>
</dbReference>
<dbReference type="GO" id="GO:0006707">
    <property type="term" value="P:cholesterol catabolic process"/>
    <property type="evidence" value="ECO:0000315"/>
    <property type="project" value="MGI"/>
</dbReference>
<dbReference type="GO" id="GO:0033344">
    <property type="term" value="P:cholesterol efflux"/>
    <property type="evidence" value="ECO:0000314"/>
    <property type="project" value="MGI"/>
</dbReference>
<dbReference type="GO" id="GO:0042632">
    <property type="term" value="P:cholesterol homeostasis"/>
    <property type="evidence" value="ECO:0000315"/>
    <property type="project" value="BHF-UCL"/>
</dbReference>
<dbReference type="GO" id="GO:0008203">
    <property type="term" value="P:cholesterol metabolic process"/>
    <property type="evidence" value="ECO:0000315"/>
    <property type="project" value="MGI"/>
</dbReference>
<dbReference type="GO" id="GO:0034382">
    <property type="term" value="P:chylomicron remnant clearance"/>
    <property type="evidence" value="ECO:0000250"/>
    <property type="project" value="UniProtKB"/>
</dbReference>
<dbReference type="GO" id="GO:0072359">
    <property type="term" value="P:circulatory system development"/>
    <property type="evidence" value="ECO:0000315"/>
    <property type="project" value="MGI"/>
</dbReference>
<dbReference type="GO" id="GO:0055089">
    <property type="term" value="P:fatty acid homeostasis"/>
    <property type="evidence" value="ECO:0007669"/>
    <property type="project" value="Ensembl"/>
</dbReference>
<dbReference type="GO" id="GO:0007186">
    <property type="term" value="P:G protein-coupled receptor signaling pathway"/>
    <property type="evidence" value="ECO:0007669"/>
    <property type="project" value="Ensembl"/>
</dbReference>
<dbReference type="GO" id="GO:0010467">
    <property type="term" value="P:gene expression"/>
    <property type="evidence" value="ECO:0000316"/>
    <property type="project" value="MGI"/>
</dbReference>
<dbReference type="GO" id="GO:0034380">
    <property type="term" value="P:high-density lipoprotein particle assembly"/>
    <property type="evidence" value="ECO:0000250"/>
    <property type="project" value="UniProtKB"/>
</dbReference>
<dbReference type="GO" id="GO:0034384">
    <property type="term" value="P:high-density lipoprotein particle clearance"/>
    <property type="evidence" value="ECO:0007669"/>
    <property type="project" value="Ensembl"/>
</dbReference>
<dbReference type="GO" id="GO:0034375">
    <property type="term" value="P:high-density lipoprotein particle remodeling"/>
    <property type="evidence" value="ECO:0007669"/>
    <property type="project" value="Ensembl"/>
</dbReference>
<dbReference type="GO" id="GO:0071831">
    <property type="term" value="P:intermediate-density lipoprotein particle clearance"/>
    <property type="evidence" value="ECO:0000250"/>
    <property type="project" value="UniProtKB"/>
</dbReference>
<dbReference type="GO" id="GO:0006874">
    <property type="term" value="P:intracellular calcium ion homeostasis"/>
    <property type="evidence" value="ECO:0000314"/>
    <property type="project" value="MGI"/>
</dbReference>
<dbReference type="GO" id="GO:0055088">
    <property type="term" value="P:lipid homeostasis"/>
    <property type="evidence" value="ECO:0000315"/>
    <property type="project" value="MGI"/>
</dbReference>
<dbReference type="GO" id="GO:0006629">
    <property type="term" value="P:lipid metabolic process"/>
    <property type="evidence" value="ECO:0000316"/>
    <property type="project" value="MGI"/>
</dbReference>
<dbReference type="GO" id="GO:0010877">
    <property type="term" value="P:lipid transport involved in lipid storage"/>
    <property type="evidence" value="ECO:0000315"/>
    <property type="project" value="BHF-UCL"/>
</dbReference>
<dbReference type="GO" id="GO:0042158">
    <property type="term" value="P:lipoprotein biosynthetic process"/>
    <property type="evidence" value="ECO:0000316"/>
    <property type="project" value="MGI"/>
</dbReference>
<dbReference type="GO" id="GO:0042159">
    <property type="term" value="P:lipoprotein catabolic process"/>
    <property type="evidence" value="ECO:0000315"/>
    <property type="project" value="MGI"/>
</dbReference>
<dbReference type="GO" id="GO:0042157">
    <property type="term" value="P:lipoprotein metabolic process"/>
    <property type="evidence" value="ECO:0000315"/>
    <property type="project" value="MGI"/>
</dbReference>
<dbReference type="GO" id="GO:0035641">
    <property type="term" value="P:locomotory exploration behavior"/>
    <property type="evidence" value="ECO:0007669"/>
    <property type="project" value="Ensembl"/>
</dbReference>
<dbReference type="GO" id="GO:0015909">
    <property type="term" value="P:long-chain fatty acid transport"/>
    <property type="evidence" value="ECO:0007669"/>
    <property type="project" value="Ensembl"/>
</dbReference>
<dbReference type="GO" id="GO:0007616">
    <property type="term" value="P:long-term memory"/>
    <property type="evidence" value="ECO:0007669"/>
    <property type="project" value="Ensembl"/>
</dbReference>
<dbReference type="GO" id="GO:0034374">
    <property type="term" value="P:low-density lipoprotein particle remodeling"/>
    <property type="evidence" value="ECO:0000315"/>
    <property type="project" value="BHF-UCL"/>
</dbReference>
<dbReference type="GO" id="GO:0051651">
    <property type="term" value="P:maintenance of location in cell"/>
    <property type="evidence" value="ECO:0000315"/>
    <property type="project" value="MGI"/>
</dbReference>
<dbReference type="GO" id="GO:0032438">
    <property type="term" value="P:melanosome organization"/>
    <property type="evidence" value="ECO:0000315"/>
    <property type="project" value="UniProtKB"/>
</dbReference>
<dbReference type="GO" id="GO:1905907">
    <property type="term" value="P:negative regulation of amyloid fibril formation"/>
    <property type="evidence" value="ECO:0000315"/>
    <property type="project" value="UniProtKB"/>
</dbReference>
<dbReference type="GO" id="GO:1902430">
    <property type="term" value="P:negative regulation of amyloid-beta formation"/>
    <property type="evidence" value="ECO:0007669"/>
    <property type="project" value="Ensembl"/>
</dbReference>
<dbReference type="GO" id="GO:0043537">
    <property type="term" value="P:negative regulation of blood vessel endothelial cell migration"/>
    <property type="evidence" value="ECO:0007669"/>
    <property type="project" value="Ensembl"/>
</dbReference>
<dbReference type="GO" id="GO:0090090">
    <property type="term" value="P:negative regulation of canonical Wnt signaling pathway"/>
    <property type="evidence" value="ECO:0007669"/>
    <property type="project" value="Ensembl"/>
</dbReference>
<dbReference type="GO" id="GO:0045541">
    <property type="term" value="P:negative regulation of cholesterol biosynthetic process"/>
    <property type="evidence" value="ECO:0007669"/>
    <property type="project" value="Ensembl"/>
</dbReference>
<dbReference type="GO" id="GO:0001937">
    <property type="term" value="P:negative regulation of endothelial cell proliferation"/>
    <property type="evidence" value="ECO:0007669"/>
    <property type="project" value="Ensembl"/>
</dbReference>
<dbReference type="GO" id="GO:0010629">
    <property type="term" value="P:negative regulation of gene expression"/>
    <property type="evidence" value="ECO:0000315"/>
    <property type="project" value="ARUK-UCL"/>
</dbReference>
<dbReference type="GO" id="GO:0050728">
    <property type="term" value="P:negative regulation of inflammatory response"/>
    <property type="evidence" value="ECO:0000316"/>
    <property type="project" value="UniProtKB"/>
</dbReference>
<dbReference type="GO" id="GO:1900272">
    <property type="term" value="P:negative regulation of long-term synaptic potentiation"/>
    <property type="evidence" value="ECO:0007669"/>
    <property type="project" value="Ensembl"/>
</dbReference>
<dbReference type="GO" id="GO:0010977">
    <property type="term" value="P:negative regulation of neuron projection development"/>
    <property type="evidence" value="ECO:0007669"/>
    <property type="project" value="Ensembl"/>
</dbReference>
<dbReference type="GO" id="GO:0010544">
    <property type="term" value="P:negative regulation of platelet activation"/>
    <property type="evidence" value="ECO:0007669"/>
    <property type="project" value="Ensembl"/>
</dbReference>
<dbReference type="GO" id="GO:0050709">
    <property type="term" value="P:negative regulation of protein secretion"/>
    <property type="evidence" value="ECO:0007669"/>
    <property type="project" value="Ensembl"/>
</dbReference>
<dbReference type="GO" id="GO:0048662">
    <property type="term" value="P:negative regulation of smooth muscle cell proliferation"/>
    <property type="evidence" value="ECO:0000316"/>
    <property type="project" value="BHF-UCL"/>
</dbReference>
<dbReference type="GO" id="GO:0090209">
    <property type="term" value="P:negative regulation of triglyceride metabolic process"/>
    <property type="evidence" value="ECO:0000316"/>
    <property type="project" value="MGI"/>
</dbReference>
<dbReference type="GO" id="GO:0031175">
    <property type="term" value="P:neuron projection development"/>
    <property type="evidence" value="ECO:0007669"/>
    <property type="project" value="Ensembl"/>
</dbReference>
<dbReference type="GO" id="GO:0038060">
    <property type="term" value="P:nitric oxide-cGMP-mediated signaling"/>
    <property type="evidence" value="ECO:0007669"/>
    <property type="project" value="Ensembl"/>
</dbReference>
<dbReference type="GO" id="GO:0033700">
    <property type="term" value="P:phospholipid efflux"/>
    <property type="evidence" value="ECO:0007669"/>
    <property type="project" value="Ensembl"/>
</dbReference>
<dbReference type="GO" id="GO:0044794">
    <property type="term" value="P:positive regulation by host of viral process"/>
    <property type="evidence" value="ECO:0007669"/>
    <property type="project" value="Ensembl"/>
</dbReference>
<dbReference type="GO" id="GO:1900223">
    <property type="term" value="P:positive regulation of amyloid-beta clearance"/>
    <property type="evidence" value="ECO:0000315"/>
    <property type="project" value="UniProtKB"/>
</dbReference>
<dbReference type="GO" id="GO:0010875">
    <property type="term" value="P:positive regulation of cholesterol efflux"/>
    <property type="evidence" value="ECO:0000315"/>
    <property type="project" value="ARUK-UCL"/>
</dbReference>
<dbReference type="GO" id="GO:0090205">
    <property type="term" value="P:positive regulation of cholesterol metabolic process"/>
    <property type="evidence" value="ECO:0000315"/>
    <property type="project" value="BHF-UCL"/>
</dbReference>
<dbReference type="GO" id="GO:0060999">
    <property type="term" value="P:positive regulation of dendritic spine development"/>
    <property type="evidence" value="ECO:0007669"/>
    <property type="project" value="Ensembl"/>
</dbReference>
<dbReference type="GO" id="GO:1902952">
    <property type="term" value="P:positive regulation of dendritic spine maintenance"/>
    <property type="evidence" value="ECO:0007669"/>
    <property type="project" value="Ensembl"/>
</dbReference>
<dbReference type="GO" id="GO:0045893">
    <property type="term" value="P:positive regulation of DNA-templated transcription"/>
    <property type="evidence" value="ECO:0007669"/>
    <property type="project" value="Ensembl"/>
</dbReference>
<dbReference type="GO" id="GO:0045807">
    <property type="term" value="P:positive regulation of endocytosis"/>
    <property type="evidence" value="ECO:0007669"/>
    <property type="project" value="Ensembl"/>
</dbReference>
<dbReference type="GO" id="GO:0070374">
    <property type="term" value="P:positive regulation of ERK1 and ERK2 cascade"/>
    <property type="evidence" value="ECO:0007669"/>
    <property type="project" value="Ensembl"/>
</dbReference>
<dbReference type="GO" id="GO:0046889">
    <property type="term" value="P:positive regulation of lipid biosynthetic process"/>
    <property type="evidence" value="ECO:0007669"/>
    <property type="project" value="Ensembl"/>
</dbReference>
<dbReference type="GO" id="GO:1903002">
    <property type="term" value="P:positive regulation of lipid transport across blood-brain barrier"/>
    <property type="evidence" value="ECO:0007669"/>
    <property type="project" value="Ensembl"/>
</dbReference>
<dbReference type="GO" id="GO:0140077">
    <property type="term" value="P:positive regulation of lipoprotein transport"/>
    <property type="evidence" value="ECO:0007669"/>
    <property type="project" value="Ensembl"/>
</dbReference>
<dbReference type="GO" id="GO:0032805">
    <property type="term" value="P:positive regulation of low-density lipoprotein particle receptor catabolic process"/>
    <property type="evidence" value="ECO:0007669"/>
    <property type="project" value="Ensembl"/>
</dbReference>
<dbReference type="GO" id="GO:0051044">
    <property type="term" value="P:positive regulation of membrane protein ectodomain proteolysis"/>
    <property type="evidence" value="ECO:0007669"/>
    <property type="project" value="Ensembl"/>
</dbReference>
<dbReference type="GO" id="GO:0010976">
    <property type="term" value="P:positive regulation of neuron projection development"/>
    <property type="evidence" value="ECO:0000315"/>
    <property type="project" value="ARUK-UCL"/>
</dbReference>
<dbReference type="GO" id="GO:0045429">
    <property type="term" value="P:positive regulation of nitric oxide biosynthetic process"/>
    <property type="evidence" value="ECO:0007669"/>
    <property type="project" value="Ensembl"/>
</dbReference>
<dbReference type="GO" id="GO:1902995">
    <property type="term" value="P:positive regulation of phospholipid efflux"/>
    <property type="evidence" value="ECO:0007669"/>
    <property type="project" value="Ensembl"/>
</dbReference>
<dbReference type="GO" id="GO:0006898">
    <property type="term" value="P:receptor-mediated endocytosis"/>
    <property type="evidence" value="ECO:0007669"/>
    <property type="project" value="Ensembl"/>
</dbReference>
<dbReference type="GO" id="GO:0042981">
    <property type="term" value="P:regulation of apoptotic process"/>
    <property type="evidence" value="ECO:0000315"/>
    <property type="project" value="UniProtKB"/>
</dbReference>
<dbReference type="GO" id="GO:2000822">
    <property type="term" value="P:regulation of behavioral fear response"/>
    <property type="evidence" value="ECO:0007669"/>
    <property type="project" value="Ensembl"/>
</dbReference>
<dbReference type="GO" id="GO:0032489">
    <property type="term" value="P:regulation of Cdc42 protein signal transduction"/>
    <property type="evidence" value="ECO:0007669"/>
    <property type="project" value="Ensembl"/>
</dbReference>
<dbReference type="GO" id="GO:1905890">
    <property type="term" value="P:regulation of cellular response to very-low-density lipoprotein particle stimulus"/>
    <property type="evidence" value="ECO:0007669"/>
    <property type="project" value="Ensembl"/>
</dbReference>
<dbReference type="GO" id="GO:0010468">
    <property type="term" value="P:regulation of gene expression"/>
    <property type="evidence" value="ECO:0000315"/>
    <property type="project" value="MGI"/>
</dbReference>
<dbReference type="GO" id="GO:0045088">
    <property type="term" value="P:regulation of innate immune response"/>
    <property type="evidence" value="ECO:0000315"/>
    <property type="project" value="UniProtKB"/>
</dbReference>
<dbReference type="GO" id="GO:0097006">
    <property type="term" value="P:regulation of plasma lipoprotein particle levels"/>
    <property type="evidence" value="ECO:0000315"/>
    <property type="project" value="BHF-UCL"/>
</dbReference>
<dbReference type="GO" id="GO:0061136">
    <property type="term" value="P:regulation of proteasomal protein catabolic process"/>
    <property type="evidence" value="ECO:0007669"/>
    <property type="project" value="Ensembl"/>
</dbReference>
<dbReference type="GO" id="GO:0043254">
    <property type="term" value="P:regulation of protein-containing complex assembly"/>
    <property type="evidence" value="ECO:0007669"/>
    <property type="project" value="Ensembl"/>
</dbReference>
<dbReference type="GO" id="GO:0050807">
    <property type="term" value="P:regulation of synapse organization"/>
    <property type="evidence" value="ECO:0000314"/>
    <property type="project" value="SynGO"/>
</dbReference>
<dbReference type="GO" id="GO:0061771">
    <property type="term" value="P:response to caloric restriction"/>
    <property type="evidence" value="ECO:0007669"/>
    <property type="project" value="Ensembl"/>
</dbReference>
<dbReference type="GO" id="GO:0002021">
    <property type="term" value="P:response to dietary excess"/>
    <property type="evidence" value="ECO:0000315"/>
    <property type="project" value="MGI"/>
</dbReference>
<dbReference type="GO" id="GO:0006979">
    <property type="term" value="P:response to oxidative stress"/>
    <property type="evidence" value="ECO:0000315"/>
    <property type="project" value="MGI"/>
</dbReference>
<dbReference type="GO" id="GO:0043691">
    <property type="term" value="P:reverse cholesterol transport"/>
    <property type="evidence" value="ECO:0007669"/>
    <property type="project" value="Ensembl"/>
</dbReference>
<dbReference type="GO" id="GO:0070328">
    <property type="term" value="P:triglyceride homeostasis"/>
    <property type="evidence" value="ECO:0000315"/>
    <property type="project" value="UniProtKB"/>
</dbReference>
<dbReference type="GO" id="GO:0006641">
    <property type="term" value="P:triglyceride metabolic process"/>
    <property type="evidence" value="ECO:0007669"/>
    <property type="project" value="Ensembl"/>
</dbReference>
<dbReference type="GO" id="GO:0071830">
    <property type="term" value="P:triglyceride-rich lipoprotein particle clearance"/>
    <property type="evidence" value="ECO:0000315"/>
    <property type="project" value="UniProtKB"/>
</dbReference>
<dbReference type="GO" id="GO:0042311">
    <property type="term" value="P:vasodilation"/>
    <property type="evidence" value="ECO:0000315"/>
    <property type="project" value="MGI"/>
</dbReference>
<dbReference type="GO" id="GO:0034447">
    <property type="term" value="P:very-low-density lipoprotein particle clearance"/>
    <property type="evidence" value="ECO:0000250"/>
    <property type="project" value="UniProtKB"/>
</dbReference>
<dbReference type="GO" id="GO:0034372">
    <property type="term" value="P:very-low-density lipoprotein particle remodeling"/>
    <property type="evidence" value="ECO:0000315"/>
    <property type="project" value="BHF-UCL"/>
</dbReference>
<dbReference type="GO" id="GO:0019068">
    <property type="term" value="P:virion assembly"/>
    <property type="evidence" value="ECO:0007669"/>
    <property type="project" value="Ensembl"/>
</dbReference>
<dbReference type="FunFam" id="1.20.120.20:FF:000002">
    <property type="entry name" value="Apolipoprotein E"/>
    <property type="match status" value="1"/>
</dbReference>
<dbReference type="FunFam" id="1.20.120.20:FF:000003">
    <property type="entry name" value="Apolipoprotein E"/>
    <property type="match status" value="1"/>
</dbReference>
<dbReference type="Gene3D" id="1.20.120.20">
    <property type="entry name" value="Apolipoprotein"/>
    <property type="match status" value="2"/>
</dbReference>
<dbReference type="InterPro" id="IPR000074">
    <property type="entry name" value="ApoA_E"/>
</dbReference>
<dbReference type="InterPro" id="IPR050163">
    <property type="entry name" value="Apolipoprotein_A1/A4/E"/>
</dbReference>
<dbReference type="PANTHER" id="PTHR18976">
    <property type="entry name" value="APOLIPOPROTEIN"/>
    <property type="match status" value="1"/>
</dbReference>
<dbReference type="PANTHER" id="PTHR18976:SF2">
    <property type="entry name" value="APOLIPOPROTEIN E"/>
    <property type="match status" value="1"/>
</dbReference>
<dbReference type="Pfam" id="PF01442">
    <property type="entry name" value="Apolipoprotein"/>
    <property type="match status" value="1"/>
</dbReference>
<dbReference type="SUPFAM" id="SSF58113">
    <property type="entry name" value="Apolipoprotein A-I"/>
    <property type="match status" value="1"/>
</dbReference>
<feature type="signal peptide" evidence="2">
    <location>
        <begin position="1"/>
        <end position="18"/>
    </location>
</feature>
<feature type="chain" id="PRO_0000001990" description="Apolipoprotein E">
    <location>
        <begin position="19"/>
        <end position="311"/>
    </location>
</feature>
<feature type="repeat" description="1">
    <location>
        <begin position="72"/>
        <end position="93"/>
    </location>
</feature>
<feature type="repeat" description="2">
    <location>
        <begin position="94"/>
        <end position="115"/>
    </location>
</feature>
<feature type="repeat" description="3">
    <location>
        <begin position="116"/>
        <end position="137"/>
    </location>
</feature>
<feature type="repeat" description="4">
    <location>
        <begin position="138"/>
        <end position="159"/>
    </location>
</feature>
<feature type="repeat" description="5">
    <location>
        <begin position="160"/>
        <end position="181"/>
    </location>
</feature>
<feature type="repeat" description="6">
    <location>
        <begin position="182"/>
        <end position="203"/>
    </location>
</feature>
<feature type="repeat" description="7">
    <location>
        <begin position="204"/>
        <end position="225"/>
    </location>
</feature>
<feature type="repeat" description="8">
    <location>
        <begin position="226"/>
        <end position="247"/>
    </location>
</feature>
<feature type="region of interest" description="8 X 22 AA approximate tandem repeats">
    <location>
        <begin position="72"/>
        <end position="247"/>
    </location>
</feature>
<feature type="region of interest" description="LDL and other lipoprotein receptors binding" evidence="1">
    <location>
        <begin position="150"/>
        <end position="160"/>
    </location>
</feature>
<feature type="region of interest" description="Lipid-binding and lipoprotein association" evidence="1">
    <location>
        <begin position="202"/>
        <end position="282"/>
    </location>
</feature>
<feature type="region of interest" description="Homooligomerization" evidence="1">
    <location>
        <begin position="258"/>
        <end position="311"/>
    </location>
</feature>
<feature type="region of interest" description="Specificity for association with VLDL" evidence="1">
    <location>
        <begin position="270"/>
        <end position="282"/>
    </location>
</feature>
<feature type="binding site" evidence="1">
    <location>
        <begin position="154"/>
        <end position="157"/>
    </location>
    <ligand>
        <name>heparin</name>
        <dbReference type="ChEBI" id="CHEBI:28304"/>
    </ligand>
</feature>
<feature type="binding site" evidence="1">
    <location>
        <begin position="221"/>
        <end position="228"/>
    </location>
    <ligand>
        <name>heparin</name>
        <dbReference type="ChEBI" id="CHEBI:28304"/>
    </ligand>
</feature>
<feature type="modified residue" description="Methionine sulfoxide" evidence="5">
    <location>
        <position position="135"/>
    </location>
</feature>
<feature type="modified residue" description="Phosphoserine" evidence="12">
    <location>
        <position position="139"/>
    </location>
</feature>
<feature type="sequence conflict" description="In Ref. 2; AAA37251." evidence="11" ref="2">
    <original>E</original>
    <variation>D</variation>
    <location>
        <position position="163"/>
    </location>
</feature>
<feature type="helix" evidence="13">
    <location>
        <begin position="29"/>
        <end position="31"/>
    </location>
</feature>
<feature type="helix" evidence="13">
    <location>
        <begin position="34"/>
        <end position="50"/>
    </location>
</feature>
<feature type="helix" evidence="13">
    <location>
        <begin position="55"/>
        <end position="62"/>
    </location>
</feature>
<feature type="helix" evidence="13">
    <location>
        <begin position="65"/>
        <end position="90"/>
    </location>
</feature>
<feature type="helix" evidence="13">
    <location>
        <begin position="97"/>
        <end position="134"/>
    </location>
</feature>
<feature type="turn" evidence="13">
    <location>
        <begin position="135"/>
        <end position="137"/>
    </location>
</feature>
<feature type="helix" evidence="13">
    <location>
        <begin position="141"/>
        <end position="172"/>
    </location>
</feature>
<feature type="helix" evidence="13">
    <location>
        <begin position="184"/>
        <end position="191"/>
    </location>
</feature>
<name>APOE_MOUSE</name>
<sequence length="311" mass="35867">MKALWAVLLVTLLTGCLAEGEPEVTDQLEWQSNQPWEQALNRFWDYLRWVQTLSDQVQEELQSSQVTQELTALMEDTMTEVKAYKKELEEQLGPVAEETRARLGKEVQAAQARLGADMEDLRNRLGQYRNEVHTMLGQSTEEIRARLSTHLRKMRKRLMRDAEDLQKRLAVYKAGAREGAERGVSAIRERLGPLVEQGRQRTANLGAGAAQPLRDRAQAFGDRIRGRLEEVGNQARDRLEEVREHMEEVRSKMEEQTQQIRLQAEIFQARLKGWFEPIVEDMHRQWANLMEKIQASVATNPIITPVAQENQ</sequence>
<proteinExistence type="evidence at protein level"/>
<organism>
    <name type="scientific">Mus musculus</name>
    <name type="common">Mouse</name>
    <dbReference type="NCBI Taxonomy" id="10090"/>
    <lineage>
        <taxon>Eukaryota</taxon>
        <taxon>Metazoa</taxon>
        <taxon>Chordata</taxon>
        <taxon>Craniata</taxon>
        <taxon>Vertebrata</taxon>
        <taxon>Euteleostomi</taxon>
        <taxon>Mammalia</taxon>
        <taxon>Eutheria</taxon>
        <taxon>Euarchontoglires</taxon>
        <taxon>Glires</taxon>
        <taxon>Rodentia</taxon>
        <taxon>Myomorpha</taxon>
        <taxon>Muroidea</taxon>
        <taxon>Muridae</taxon>
        <taxon>Murinae</taxon>
        <taxon>Mus</taxon>
        <taxon>Mus</taxon>
    </lineage>
</organism>
<evidence type="ECO:0000250" key="1">
    <source>
        <dbReference type="UniProtKB" id="P02649"/>
    </source>
</evidence>
<evidence type="ECO:0000255" key="2"/>
<evidence type="ECO:0000269" key="3">
    <source>
    </source>
</evidence>
<evidence type="ECO:0000269" key="4">
    <source>
    </source>
</evidence>
<evidence type="ECO:0000269" key="5">
    <source>
    </source>
</evidence>
<evidence type="ECO:0000269" key="6">
    <source>
    </source>
</evidence>
<evidence type="ECO:0000269" key="7">
    <source>
    </source>
</evidence>
<evidence type="ECO:0000269" key="8">
    <source>
    </source>
</evidence>
<evidence type="ECO:0000269" key="9">
    <source>
    </source>
</evidence>
<evidence type="ECO:0000269" key="10">
    <source>
    </source>
</evidence>
<evidence type="ECO:0000305" key="11"/>
<evidence type="ECO:0007744" key="12">
    <source>
    </source>
</evidence>
<evidence type="ECO:0007829" key="13">
    <source>
        <dbReference type="PDB" id="1YA9"/>
    </source>
</evidence>
<gene>
    <name type="primary">Apoe</name>
</gene>
<keyword id="KW-0002">3D-structure</keyword>
<keyword id="KW-0162">Chylomicron</keyword>
<keyword id="KW-0903">Direct protein sequencing</keyword>
<keyword id="KW-0967">Endosome</keyword>
<keyword id="KW-0272">Extracellular matrix</keyword>
<keyword id="KW-0325">Glycoprotein</keyword>
<keyword id="KW-0345">HDL</keyword>
<keyword id="KW-0358">Heparin-binding</keyword>
<keyword id="KW-0445">Lipid transport</keyword>
<keyword id="KW-0446">Lipid-binding</keyword>
<keyword id="KW-0558">Oxidation</keyword>
<keyword id="KW-0597">Phosphoprotein</keyword>
<keyword id="KW-1185">Reference proteome</keyword>
<keyword id="KW-0677">Repeat</keyword>
<keyword id="KW-0964">Secreted</keyword>
<keyword id="KW-0732">Signal</keyword>
<keyword id="KW-0813">Transport</keyword>
<keyword id="KW-0850">VLDL</keyword>
<protein>
    <recommendedName>
        <fullName>Apolipoprotein E</fullName>
        <shortName>Apo-E</shortName>
    </recommendedName>
</protein>
<accession>P08226</accession>